<dbReference type="EMBL" id="CP001215">
    <property type="protein sequence ID" value="ACP14522.1"/>
    <property type="molecule type" value="Genomic_DNA"/>
</dbReference>
<dbReference type="RefSeq" id="WP_001085558.1">
    <property type="nucleotide sequence ID" value="NC_012581.1"/>
</dbReference>
<dbReference type="SMR" id="C3LF98"/>
<dbReference type="GeneID" id="45020820"/>
<dbReference type="KEGG" id="bah:BAMEG_3817"/>
<dbReference type="HOGENOM" id="CLU_077094_1_0_9"/>
<dbReference type="GO" id="GO:0005886">
    <property type="term" value="C:plasma membrane"/>
    <property type="evidence" value="ECO:0007669"/>
    <property type="project" value="UniProtKB-SubCell"/>
</dbReference>
<dbReference type="GO" id="GO:0005524">
    <property type="term" value="F:ATP binding"/>
    <property type="evidence" value="ECO:0007669"/>
    <property type="project" value="UniProtKB-UniRule"/>
</dbReference>
<dbReference type="GO" id="GO:0008556">
    <property type="term" value="F:P-type potassium transmembrane transporter activity"/>
    <property type="evidence" value="ECO:0007669"/>
    <property type="project" value="InterPro"/>
</dbReference>
<dbReference type="HAMAP" id="MF_00276">
    <property type="entry name" value="KdpC"/>
    <property type="match status" value="1"/>
</dbReference>
<dbReference type="InterPro" id="IPR003820">
    <property type="entry name" value="KdpC"/>
</dbReference>
<dbReference type="NCBIfam" id="TIGR00681">
    <property type="entry name" value="kdpC"/>
    <property type="match status" value="1"/>
</dbReference>
<dbReference type="NCBIfam" id="NF001454">
    <property type="entry name" value="PRK00315.1"/>
    <property type="match status" value="1"/>
</dbReference>
<dbReference type="NCBIfam" id="NF010601">
    <property type="entry name" value="PRK13997.1"/>
    <property type="match status" value="1"/>
</dbReference>
<dbReference type="PANTHER" id="PTHR30042">
    <property type="entry name" value="POTASSIUM-TRANSPORTING ATPASE C CHAIN"/>
    <property type="match status" value="1"/>
</dbReference>
<dbReference type="PANTHER" id="PTHR30042:SF2">
    <property type="entry name" value="POTASSIUM-TRANSPORTING ATPASE KDPC SUBUNIT"/>
    <property type="match status" value="1"/>
</dbReference>
<dbReference type="Pfam" id="PF02669">
    <property type="entry name" value="KdpC"/>
    <property type="match status" value="1"/>
</dbReference>
<dbReference type="PIRSF" id="PIRSF001296">
    <property type="entry name" value="K_ATPase_KdpC"/>
    <property type="match status" value="1"/>
</dbReference>
<keyword id="KW-0067">ATP-binding</keyword>
<keyword id="KW-1003">Cell membrane</keyword>
<keyword id="KW-0406">Ion transport</keyword>
<keyword id="KW-0472">Membrane</keyword>
<keyword id="KW-0547">Nucleotide-binding</keyword>
<keyword id="KW-0630">Potassium</keyword>
<keyword id="KW-0633">Potassium transport</keyword>
<keyword id="KW-0812">Transmembrane</keyword>
<keyword id="KW-1133">Transmembrane helix</keyword>
<keyword id="KW-0813">Transport</keyword>
<comment type="function">
    <text evidence="1">Part of the high-affinity ATP-driven potassium transport (or Kdp) system, which catalyzes the hydrolysis of ATP coupled with the electrogenic transport of potassium into the cytoplasm. This subunit acts as a catalytic chaperone that increases the ATP-binding affinity of the ATP-hydrolyzing subunit KdpB by the formation of a transient KdpB/KdpC/ATP ternary complex.</text>
</comment>
<comment type="subunit">
    <text evidence="1">The system is composed of three essential subunits: KdpA, KdpB and KdpC.</text>
</comment>
<comment type="subcellular location">
    <subcellularLocation>
        <location evidence="1">Cell membrane</location>
        <topology evidence="1">Single-pass membrane protein</topology>
    </subcellularLocation>
</comment>
<comment type="similarity">
    <text evidence="1">Belongs to the KdpC family.</text>
</comment>
<name>KDPC_BACAC</name>
<gene>
    <name evidence="1" type="primary">kdpC</name>
    <name type="ordered locus">BAMEG_3817</name>
</gene>
<proteinExistence type="inferred from homology"/>
<feature type="chain" id="PRO_1000132511" description="Potassium-transporting ATPase KdpC subunit">
    <location>
        <begin position="1"/>
        <end position="193"/>
    </location>
</feature>
<feature type="transmembrane region" description="Helical" evidence="1">
    <location>
        <begin position="14"/>
        <end position="34"/>
    </location>
</feature>
<evidence type="ECO:0000255" key="1">
    <source>
        <dbReference type="HAMAP-Rule" id="MF_00276"/>
    </source>
</evidence>
<reference key="1">
    <citation type="submission" date="2008-10" db="EMBL/GenBank/DDBJ databases">
        <title>Genome sequence of Bacillus anthracis str. CDC 684.</title>
        <authorList>
            <person name="Dodson R.J."/>
            <person name="Munk A.C."/>
            <person name="Brettin T."/>
            <person name="Bruce D."/>
            <person name="Detter C."/>
            <person name="Tapia R."/>
            <person name="Han C."/>
            <person name="Sutton G."/>
            <person name="Sims D."/>
        </authorList>
    </citation>
    <scope>NUCLEOTIDE SEQUENCE [LARGE SCALE GENOMIC DNA]</scope>
    <source>
        <strain>CDC 684 / NRRL 3495</strain>
    </source>
</reference>
<sequence length="193" mass="21157">MAKKQSILSPIIRITFTFLVLCGLVYPLIVTGIAQAVMKDNADGSLIYNDKNEVIGSKLIGQNFTDPRYFHGRVSSIEYKAEASGSNNYAPSNPDLEKRVEKSIEEWKKQNPSVPVTEVPIDLVTNSGSGLDPDISPKAASVQVERISKLTNIPKETLDQLIKDQTEGAALGLFGETRVNVLKLNLGLQKIMK</sequence>
<accession>C3LF98</accession>
<protein>
    <recommendedName>
        <fullName evidence="1">Potassium-transporting ATPase KdpC subunit</fullName>
    </recommendedName>
    <alternativeName>
        <fullName evidence="1">ATP phosphohydrolase [potassium-transporting] C chain</fullName>
    </alternativeName>
    <alternativeName>
        <fullName evidence="1">Potassium-binding and translocating subunit C</fullName>
    </alternativeName>
    <alternativeName>
        <fullName evidence="1">Potassium-translocating ATPase C chain</fullName>
    </alternativeName>
</protein>
<organism>
    <name type="scientific">Bacillus anthracis (strain CDC 684 / NRRL 3495)</name>
    <dbReference type="NCBI Taxonomy" id="568206"/>
    <lineage>
        <taxon>Bacteria</taxon>
        <taxon>Bacillati</taxon>
        <taxon>Bacillota</taxon>
        <taxon>Bacilli</taxon>
        <taxon>Bacillales</taxon>
        <taxon>Bacillaceae</taxon>
        <taxon>Bacillus</taxon>
        <taxon>Bacillus cereus group</taxon>
    </lineage>
</organism>